<accession>A2S5T4</accession>
<gene>
    <name evidence="1" type="primary">secA</name>
    <name type="ordered locus">BMA10229_A1320</name>
</gene>
<organism>
    <name type="scientific">Burkholderia mallei (strain NCTC 10229)</name>
    <dbReference type="NCBI Taxonomy" id="412022"/>
    <lineage>
        <taxon>Bacteria</taxon>
        <taxon>Pseudomonadati</taxon>
        <taxon>Pseudomonadota</taxon>
        <taxon>Betaproteobacteria</taxon>
        <taxon>Burkholderiales</taxon>
        <taxon>Burkholderiaceae</taxon>
        <taxon>Burkholderia</taxon>
        <taxon>pseudomallei group</taxon>
    </lineage>
</organism>
<dbReference type="EC" id="7.4.2.8" evidence="1"/>
<dbReference type="EMBL" id="CP000546">
    <property type="protein sequence ID" value="ABN01864.1"/>
    <property type="molecule type" value="Genomic_DNA"/>
</dbReference>
<dbReference type="RefSeq" id="WP_004194125.1">
    <property type="nucleotide sequence ID" value="NC_008836.1"/>
</dbReference>
<dbReference type="SMR" id="A2S5T4"/>
<dbReference type="GeneID" id="92980233"/>
<dbReference type="KEGG" id="bml:BMA10229_A1320"/>
<dbReference type="HOGENOM" id="CLU_005314_3_0_4"/>
<dbReference type="Proteomes" id="UP000002283">
    <property type="component" value="Chromosome I"/>
</dbReference>
<dbReference type="GO" id="GO:0031522">
    <property type="term" value="C:cell envelope Sec protein transport complex"/>
    <property type="evidence" value="ECO:0007669"/>
    <property type="project" value="TreeGrafter"/>
</dbReference>
<dbReference type="GO" id="GO:0005829">
    <property type="term" value="C:cytosol"/>
    <property type="evidence" value="ECO:0007669"/>
    <property type="project" value="TreeGrafter"/>
</dbReference>
<dbReference type="GO" id="GO:0005886">
    <property type="term" value="C:plasma membrane"/>
    <property type="evidence" value="ECO:0007669"/>
    <property type="project" value="UniProtKB-SubCell"/>
</dbReference>
<dbReference type="GO" id="GO:0005524">
    <property type="term" value="F:ATP binding"/>
    <property type="evidence" value="ECO:0007669"/>
    <property type="project" value="UniProtKB-UniRule"/>
</dbReference>
<dbReference type="GO" id="GO:0046872">
    <property type="term" value="F:metal ion binding"/>
    <property type="evidence" value="ECO:0007669"/>
    <property type="project" value="UniProtKB-KW"/>
</dbReference>
<dbReference type="GO" id="GO:0008564">
    <property type="term" value="F:protein-exporting ATPase activity"/>
    <property type="evidence" value="ECO:0007669"/>
    <property type="project" value="UniProtKB-EC"/>
</dbReference>
<dbReference type="GO" id="GO:0065002">
    <property type="term" value="P:intracellular protein transmembrane transport"/>
    <property type="evidence" value="ECO:0007669"/>
    <property type="project" value="UniProtKB-UniRule"/>
</dbReference>
<dbReference type="GO" id="GO:0017038">
    <property type="term" value="P:protein import"/>
    <property type="evidence" value="ECO:0007669"/>
    <property type="project" value="InterPro"/>
</dbReference>
<dbReference type="GO" id="GO:0006605">
    <property type="term" value="P:protein targeting"/>
    <property type="evidence" value="ECO:0007669"/>
    <property type="project" value="UniProtKB-UniRule"/>
</dbReference>
<dbReference type="GO" id="GO:0043952">
    <property type="term" value="P:protein transport by the Sec complex"/>
    <property type="evidence" value="ECO:0007669"/>
    <property type="project" value="TreeGrafter"/>
</dbReference>
<dbReference type="CDD" id="cd17928">
    <property type="entry name" value="DEXDc_SecA"/>
    <property type="match status" value="1"/>
</dbReference>
<dbReference type="CDD" id="cd18803">
    <property type="entry name" value="SF2_C_secA"/>
    <property type="match status" value="1"/>
</dbReference>
<dbReference type="FunFam" id="3.40.50.300:FF:000081">
    <property type="entry name" value="Preprotein translocase subunit SecA"/>
    <property type="match status" value="1"/>
</dbReference>
<dbReference type="FunFam" id="3.40.50.300:FF:000113">
    <property type="entry name" value="Preprotein translocase subunit SecA"/>
    <property type="match status" value="1"/>
</dbReference>
<dbReference type="FunFam" id="3.90.1440.10:FF:000001">
    <property type="entry name" value="Preprotein translocase subunit SecA"/>
    <property type="match status" value="1"/>
</dbReference>
<dbReference type="FunFam" id="1.10.3060.10:FF:000003">
    <property type="entry name" value="Protein translocase subunit SecA"/>
    <property type="match status" value="1"/>
</dbReference>
<dbReference type="Gene3D" id="1.10.3060.10">
    <property type="entry name" value="Helical scaffold and wing domains of SecA"/>
    <property type="match status" value="1"/>
</dbReference>
<dbReference type="Gene3D" id="3.40.50.300">
    <property type="entry name" value="P-loop containing nucleotide triphosphate hydrolases"/>
    <property type="match status" value="2"/>
</dbReference>
<dbReference type="Gene3D" id="3.90.1440.10">
    <property type="entry name" value="SecA, preprotein cross-linking domain"/>
    <property type="match status" value="1"/>
</dbReference>
<dbReference type="HAMAP" id="MF_01382">
    <property type="entry name" value="SecA"/>
    <property type="match status" value="1"/>
</dbReference>
<dbReference type="InterPro" id="IPR014001">
    <property type="entry name" value="Helicase_ATP-bd"/>
</dbReference>
<dbReference type="InterPro" id="IPR001650">
    <property type="entry name" value="Helicase_C-like"/>
</dbReference>
<dbReference type="InterPro" id="IPR027417">
    <property type="entry name" value="P-loop_NTPase"/>
</dbReference>
<dbReference type="InterPro" id="IPR004027">
    <property type="entry name" value="SEC_C_motif"/>
</dbReference>
<dbReference type="InterPro" id="IPR000185">
    <property type="entry name" value="SecA"/>
</dbReference>
<dbReference type="InterPro" id="IPR020937">
    <property type="entry name" value="SecA_CS"/>
</dbReference>
<dbReference type="InterPro" id="IPR011115">
    <property type="entry name" value="SecA_DEAD"/>
</dbReference>
<dbReference type="InterPro" id="IPR014018">
    <property type="entry name" value="SecA_motor_DEAD"/>
</dbReference>
<dbReference type="InterPro" id="IPR011130">
    <property type="entry name" value="SecA_preprotein_X-link_dom"/>
</dbReference>
<dbReference type="InterPro" id="IPR044722">
    <property type="entry name" value="SecA_SF2_C"/>
</dbReference>
<dbReference type="InterPro" id="IPR011116">
    <property type="entry name" value="SecA_Wing/Scaffold"/>
</dbReference>
<dbReference type="InterPro" id="IPR036266">
    <property type="entry name" value="SecA_Wing/Scaffold_sf"/>
</dbReference>
<dbReference type="InterPro" id="IPR036670">
    <property type="entry name" value="SecA_X-link_sf"/>
</dbReference>
<dbReference type="NCBIfam" id="NF009538">
    <property type="entry name" value="PRK12904.1"/>
    <property type="match status" value="1"/>
</dbReference>
<dbReference type="NCBIfam" id="TIGR00963">
    <property type="entry name" value="secA"/>
    <property type="match status" value="1"/>
</dbReference>
<dbReference type="PANTHER" id="PTHR30612:SF0">
    <property type="entry name" value="CHLOROPLAST PROTEIN-TRANSPORTING ATPASE"/>
    <property type="match status" value="1"/>
</dbReference>
<dbReference type="PANTHER" id="PTHR30612">
    <property type="entry name" value="SECA INNER MEMBRANE COMPONENT OF SEC PROTEIN SECRETION SYSTEM"/>
    <property type="match status" value="1"/>
</dbReference>
<dbReference type="Pfam" id="PF21090">
    <property type="entry name" value="P-loop_SecA"/>
    <property type="match status" value="1"/>
</dbReference>
<dbReference type="Pfam" id="PF02810">
    <property type="entry name" value="SEC-C"/>
    <property type="match status" value="1"/>
</dbReference>
<dbReference type="Pfam" id="PF07517">
    <property type="entry name" value="SecA_DEAD"/>
    <property type="match status" value="1"/>
</dbReference>
<dbReference type="Pfam" id="PF01043">
    <property type="entry name" value="SecA_PP_bind"/>
    <property type="match status" value="1"/>
</dbReference>
<dbReference type="Pfam" id="PF07516">
    <property type="entry name" value="SecA_SW"/>
    <property type="match status" value="1"/>
</dbReference>
<dbReference type="PRINTS" id="PR00906">
    <property type="entry name" value="SECA"/>
</dbReference>
<dbReference type="SMART" id="SM00957">
    <property type="entry name" value="SecA_DEAD"/>
    <property type="match status" value="1"/>
</dbReference>
<dbReference type="SMART" id="SM00958">
    <property type="entry name" value="SecA_PP_bind"/>
    <property type="match status" value="1"/>
</dbReference>
<dbReference type="SUPFAM" id="SSF81886">
    <property type="entry name" value="Helical scaffold and wing domains of SecA"/>
    <property type="match status" value="1"/>
</dbReference>
<dbReference type="SUPFAM" id="SSF52540">
    <property type="entry name" value="P-loop containing nucleoside triphosphate hydrolases"/>
    <property type="match status" value="2"/>
</dbReference>
<dbReference type="SUPFAM" id="SSF81767">
    <property type="entry name" value="Pre-protein crosslinking domain of SecA"/>
    <property type="match status" value="1"/>
</dbReference>
<dbReference type="PROSITE" id="PS01312">
    <property type="entry name" value="SECA"/>
    <property type="match status" value="1"/>
</dbReference>
<dbReference type="PROSITE" id="PS51196">
    <property type="entry name" value="SECA_MOTOR_DEAD"/>
    <property type="match status" value="1"/>
</dbReference>
<protein>
    <recommendedName>
        <fullName evidence="1">Protein translocase subunit SecA</fullName>
        <ecNumber evidence="1">7.4.2.8</ecNumber>
    </recommendedName>
</protein>
<feature type="chain" id="PRO_0000320750" description="Protein translocase subunit SecA">
    <location>
        <begin position="1"/>
        <end position="931"/>
    </location>
</feature>
<feature type="binding site" evidence="1">
    <location>
        <position position="87"/>
    </location>
    <ligand>
        <name>ATP</name>
        <dbReference type="ChEBI" id="CHEBI:30616"/>
    </ligand>
</feature>
<feature type="binding site" evidence="1">
    <location>
        <begin position="105"/>
        <end position="109"/>
    </location>
    <ligand>
        <name>ATP</name>
        <dbReference type="ChEBI" id="CHEBI:30616"/>
    </ligand>
</feature>
<feature type="binding site" evidence="1">
    <location>
        <position position="515"/>
    </location>
    <ligand>
        <name>ATP</name>
        <dbReference type="ChEBI" id="CHEBI:30616"/>
    </ligand>
</feature>
<feature type="binding site" evidence="1">
    <location>
        <position position="915"/>
    </location>
    <ligand>
        <name>Zn(2+)</name>
        <dbReference type="ChEBI" id="CHEBI:29105"/>
    </ligand>
</feature>
<feature type="binding site" evidence="1">
    <location>
        <position position="917"/>
    </location>
    <ligand>
        <name>Zn(2+)</name>
        <dbReference type="ChEBI" id="CHEBI:29105"/>
    </ligand>
</feature>
<feature type="binding site" evidence="1">
    <location>
        <position position="926"/>
    </location>
    <ligand>
        <name>Zn(2+)</name>
        <dbReference type="ChEBI" id="CHEBI:29105"/>
    </ligand>
</feature>
<feature type="binding site" evidence="1">
    <location>
        <position position="927"/>
    </location>
    <ligand>
        <name>Zn(2+)</name>
        <dbReference type="ChEBI" id="CHEBI:29105"/>
    </ligand>
</feature>
<keyword id="KW-0067">ATP-binding</keyword>
<keyword id="KW-0997">Cell inner membrane</keyword>
<keyword id="KW-1003">Cell membrane</keyword>
<keyword id="KW-0963">Cytoplasm</keyword>
<keyword id="KW-0472">Membrane</keyword>
<keyword id="KW-0479">Metal-binding</keyword>
<keyword id="KW-0547">Nucleotide-binding</keyword>
<keyword id="KW-0653">Protein transport</keyword>
<keyword id="KW-1278">Translocase</keyword>
<keyword id="KW-0811">Translocation</keyword>
<keyword id="KW-0813">Transport</keyword>
<keyword id="KW-0862">Zinc</keyword>
<proteinExistence type="inferred from homology"/>
<evidence type="ECO:0000255" key="1">
    <source>
        <dbReference type="HAMAP-Rule" id="MF_01382"/>
    </source>
</evidence>
<reference key="1">
    <citation type="journal article" date="2010" name="Genome Biol. Evol.">
        <title>Continuing evolution of Burkholderia mallei through genome reduction and large-scale rearrangements.</title>
        <authorList>
            <person name="Losada L."/>
            <person name="Ronning C.M."/>
            <person name="DeShazer D."/>
            <person name="Woods D."/>
            <person name="Fedorova N."/>
            <person name="Kim H.S."/>
            <person name="Shabalina S.A."/>
            <person name="Pearson T.R."/>
            <person name="Brinkac L."/>
            <person name="Tan P."/>
            <person name="Nandi T."/>
            <person name="Crabtree J."/>
            <person name="Badger J."/>
            <person name="Beckstrom-Sternberg S."/>
            <person name="Saqib M."/>
            <person name="Schutzer S.E."/>
            <person name="Keim P."/>
            <person name="Nierman W.C."/>
        </authorList>
    </citation>
    <scope>NUCLEOTIDE SEQUENCE [LARGE SCALE GENOMIC DNA]</scope>
    <source>
        <strain>NCTC 10229</strain>
    </source>
</reference>
<sequence length="931" mass="104385">MTTGFLQKIFGSRNQRLVKQYQKTVAAINALETQIETLTDDQLRGKTGEFRQRIAAGESLDKLLPEAFAVCREASRRVLKMRHFDVQMIGGMVLHYGKIAEMRTGEGKTLVATLAAYLNALAGRGVHVVTVNDYLAQRDAEWMGRLYNFLGLSVGINLSGMEHDQKQAAYAADITYGTNNEFGFDYLRDNMVYETDSRVQRPLNFAVVDEVDSILIDEARTPLIISGQAEDHTELYVRMNALPPLLERQIGEEKADGTGVEKPGDYTLDEKGRQVFLTESGHEKAERMLAEWGLIGDGESLYAPQNITLMHHVYAALRAHTLFHRDQHYVVQNDEVIIVDEFTGRLMPGRRWSDGLHQAVEAKEHVKIQSENQTLASITFQNYFRMYAKLSGMTGTADTEAYEFNEIYGLETVVIPTNRPPKRIDKQDQIYKTAKERYDAVIRDIRECHERGQPVLVGTTSIENSELLSHLLKQAGLPHEVLNAKQHAREAAIVAEAGRPKRITIATNMAGRGTDIVLGGNVEKQAAFIEADESIPADEKARRIQQLHDEWETLHEQVKTAGGLHIIGTERHESRRIDNQLRGRAGRQGDPGSSRFYLSLEDPLLRIFAGDRVRAIMDRLKMPEGEAIEAGIVTRSIESAQRKVEARNFDIRKQLLEYDDVSNDQRKVIYQQRNELLEAHDIAETIGAMRHGVISEVVRQFVPAGSIEEQWDLPELEETLRNDWQLDLAIQEMVNESSSINADEILDAVTTAADEHYEAKVALVGRESFSAFERSIMLQTLDRLWREHLAALDHLRQGIHLRGYAQKNPKQEYKREAFELFAAMLDAVKQEVTRIVMNVQIQSPEQLEEAAEQIEEQGGQLGNVEFQHADFAAAAAAATAGGAVVADATAEMVGHAMSHSGPAGEVPRVGRNDPCPCGSGKKYKHCHGKLN</sequence>
<comment type="function">
    <text evidence="1">Part of the Sec protein translocase complex. Interacts with the SecYEG preprotein conducting channel. Has a central role in coupling the hydrolysis of ATP to the transfer of proteins into and across the cell membrane, serving both as a receptor for the preprotein-SecB complex and as an ATP-driven molecular motor driving the stepwise translocation of polypeptide chains across the membrane.</text>
</comment>
<comment type="catalytic activity">
    <reaction evidence="1">
        <text>ATP + H2O + cellular proteinSide 1 = ADP + phosphate + cellular proteinSide 2.</text>
        <dbReference type="EC" id="7.4.2.8"/>
    </reaction>
</comment>
<comment type="cofactor">
    <cofactor evidence="1">
        <name>Zn(2+)</name>
        <dbReference type="ChEBI" id="CHEBI:29105"/>
    </cofactor>
    <text evidence="1">May bind 1 zinc ion per subunit.</text>
</comment>
<comment type="subunit">
    <text evidence="1">Monomer and homodimer. Part of the essential Sec protein translocation apparatus which comprises SecA, SecYEG and auxiliary proteins SecDF-YajC and YidC.</text>
</comment>
<comment type="subcellular location">
    <subcellularLocation>
        <location evidence="1">Cell inner membrane</location>
        <topology evidence="1">Peripheral membrane protein</topology>
        <orientation evidence="1">Cytoplasmic side</orientation>
    </subcellularLocation>
    <subcellularLocation>
        <location evidence="1">Cytoplasm</location>
    </subcellularLocation>
    <text evidence="1">Distribution is 50-50.</text>
</comment>
<comment type="similarity">
    <text evidence="1">Belongs to the SecA family.</text>
</comment>
<name>SECA_BURM9</name>